<dbReference type="EMBL" id="CP001614">
    <property type="protein sequence ID" value="ACR13745.1"/>
    <property type="molecule type" value="Genomic_DNA"/>
</dbReference>
<dbReference type="RefSeq" id="WP_015819860.1">
    <property type="nucleotide sequence ID" value="NC_012997.1"/>
</dbReference>
<dbReference type="SMR" id="C5BQF6"/>
<dbReference type="STRING" id="377629.TERTU_1005"/>
<dbReference type="KEGG" id="ttu:TERTU_1005"/>
<dbReference type="eggNOG" id="COG0052">
    <property type="taxonomic scope" value="Bacteria"/>
</dbReference>
<dbReference type="HOGENOM" id="CLU_040318_1_2_6"/>
<dbReference type="OrthoDB" id="9808036at2"/>
<dbReference type="Proteomes" id="UP000009080">
    <property type="component" value="Chromosome"/>
</dbReference>
<dbReference type="GO" id="GO:0022627">
    <property type="term" value="C:cytosolic small ribosomal subunit"/>
    <property type="evidence" value="ECO:0007669"/>
    <property type="project" value="TreeGrafter"/>
</dbReference>
<dbReference type="GO" id="GO:0003735">
    <property type="term" value="F:structural constituent of ribosome"/>
    <property type="evidence" value="ECO:0007669"/>
    <property type="project" value="InterPro"/>
</dbReference>
<dbReference type="GO" id="GO:0006412">
    <property type="term" value="P:translation"/>
    <property type="evidence" value="ECO:0007669"/>
    <property type="project" value="UniProtKB-UniRule"/>
</dbReference>
<dbReference type="CDD" id="cd01425">
    <property type="entry name" value="RPS2"/>
    <property type="match status" value="1"/>
</dbReference>
<dbReference type="FunFam" id="1.10.287.610:FF:000001">
    <property type="entry name" value="30S ribosomal protein S2"/>
    <property type="match status" value="1"/>
</dbReference>
<dbReference type="Gene3D" id="3.40.50.10490">
    <property type="entry name" value="Glucose-6-phosphate isomerase like protein, domain 1"/>
    <property type="match status" value="1"/>
</dbReference>
<dbReference type="Gene3D" id="1.10.287.610">
    <property type="entry name" value="Helix hairpin bin"/>
    <property type="match status" value="1"/>
</dbReference>
<dbReference type="HAMAP" id="MF_00291_B">
    <property type="entry name" value="Ribosomal_uS2_B"/>
    <property type="match status" value="1"/>
</dbReference>
<dbReference type="InterPro" id="IPR001865">
    <property type="entry name" value="Ribosomal_uS2"/>
</dbReference>
<dbReference type="InterPro" id="IPR005706">
    <property type="entry name" value="Ribosomal_uS2_bac/mit/plastid"/>
</dbReference>
<dbReference type="InterPro" id="IPR018130">
    <property type="entry name" value="Ribosomal_uS2_CS"/>
</dbReference>
<dbReference type="InterPro" id="IPR023591">
    <property type="entry name" value="Ribosomal_uS2_flav_dom_sf"/>
</dbReference>
<dbReference type="NCBIfam" id="TIGR01011">
    <property type="entry name" value="rpsB_bact"/>
    <property type="match status" value="1"/>
</dbReference>
<dbReference type="PANTHER" id="PTHR12534">
    <property type="entry name" value="30S RIBOSOMAL PROTEIN S2 PROKARYOTIC AND ORGANELLAR"/>
    <property type="match status" value="1"/>
</dbReference>
<dbReference type="PANTHER" id="PTHR12534:SF0">
    <property type="entry name" value="SMALL RIBOSOMAL SUBUNIT PROTEIN US2M"/>
    <property type="match status" value="1"/>
</dbReference>
<dbReference type="Pfam" id="PF00318">
    <property type="entry name" value="Ribosomal_S2"/>
    <property type="match status" value="1"/>
</dbReference>
<dbReference type="PRINTS" id="PR00395">
    <property type="entry name" value="RIBOSOMALS2"/>
</dbReference>
<dbReference type="SUPFAM" id="SSF52313">
    <property type="entry name" value="Ribosomal protein S2"/>
    <property type="match status" value="1"/>
</dbReference>
<dbReference type="PROSITE" id="PS00962">
    <property type="entry name" value="RIBOSOMAL_S2_1"/>
    <property type="match status" value="1"/>
</dbReference>
<dbReference type="PROSITE" id="PS00963">
    <property type="entry name" value="RIBOSOMAL_S2_2"/>
    <property type="match status" value="1"/>
</dbReference>
<comment type="similarity">
    <text evidence="1">Belongs to the universal ribosomal protein uS2 family.</text>
</comment>
<protein>
    <recommendedName>
        <fullName evidence="1">Small ribosomal subunit protein uS2</fullName>
    </recommendedName>
    <alternativeName>
        <fullName evidence="2">30S ribosomal protein S2</fullName>
    </alternativeName>
</protein>
<sequence>MPTVSMRDMLQAGVHFGHQTRYWNPKMGQYIFGARNKIHIINLEHTVPAFNDALAVIKQMASQKKKVLFVGTKRAAQKTVKEQAERAGMPYVSNRWLGGMLTNYKTIRGSIRSYRDLETQSQDGTFEKLTKKEALMRTRTMDKLELSIGGIKDMGGLPDAMFVIDVEHERIAIQEANKLGIPVIGVVDTNSDPAGVDYVIPGNDDAIRAIKLYVTAMADACLEGAREGSPAAAADEFVEVESEEKVANNG</sequence>
<feature type="chain" id="PRO_1000204895" description="Small ribosomal subunit protein uS2">
    <location>
        <begin position="1"/>
        <end position="250"/>
    </location>
</feature>
<accession>C5BQF6</accession>
<reference key="1">
    <citation type="journal article" date="2009" name="PLoS ONE">
        <title>The complete genome of Teredinibacter turnerae T7901: an intracellular endosymbiont of marine wood-boring bivalves (shipworms).</title>
        <authorList>
            <person name="Yang J.C."/>
            <person name="Madupu R."/>
            <person name="Durkin A.S."/>
            <person name="Ekborg N.A."/>
            <person name="Pedamallu C.S."/>
            <person name="Hostetler J.B."/>
            <person name="Radune D."/>
            <person name="Toms B.S."/>
            <person name="Henrissat B."/>
            <person name="Coutinho P.M."/>
            <person name="Schwarz S."/>
            <person name="Field L."/>
            <person name="Trindade-Silva A.E."/>
            <person name="Soares C.A.G."/>
            <person name="Elshahawi S."/>
            <person name="Hanora A."/>
            <person name="Schmidt E.W."/>
            <person name="Haygood M.G."/>
            <person name="Posfai J."/>
            <person name="Benner J."/>
            <person name="Madinger C."/>
            <person name="Nove J."/>
            <person name="Anton B."/>
            <person name="Chaudhary K."/>
            <person name="Foster J."/>
            <person name="Holman A."/>
            <person name="Kumar S."/>
            <person name="Lessard P.A."/>
            <person name="Luyten Y.A."/>
            <person name="Slatko B."/>
            <person name="Wood N."/>
            <person name="Wu B."/>
            <person name="Teplitski M."/>
            <person name="Mougous J.D."/>
            <person name="Ward N."/>
            <person name="Eisen J.A."/>
            <person name="Badger J.H."/>
            <person name="Distel D.L."/>
        </authorList>
    </citation>
    <scope>NUCLEOTIDE SEQUENCE [LARGE SCALE GENOMIC DNA]</scope>
    <source>
        <strain>ATCC 39867 / T7901</strain>
    </source>
</reference>
<evidence type="ECO:0000255" key="1">
    <source>
        <dbReference type="HAMAP-Rule" id="MF_00291"/>
    </source>
</evidence>
<evidence type="ECO:0000305" key="2"/>
<gene>
    <name evidence="1" type="primary">rpsB</name>
    <name type="ordered locus">TERTU_1005</name>
</gene>
<name>RS2_TERTT</name>
<keyword id="KW-1185">Reference proteome</keyword>
<keyword id="KW-0687">Ribonucleoprotein</keyword>
<keyword id="KW-0689">Ribosomal protein</keyword>
<proteinExistence type="inferred from homology"/>
<organism>
    <name type="scientific">Teredinibacter turnerae (strain ATCC 39867 / T7901)</name>
    <dbReference type="NCBI Taxonomy" id="377629"/>
    <lineage>
        <taxon>Bacteria</taxon>
        <taxon>Pseudomonadati</taxon>
        <taxon>Pseudomonadota</taxon>
        <taxon>Gammaproteobacteria</taxon>
        <taxon>Cellvibrionales</taxon>
        <taxon>Cellvibrionaceae</taxon>
        <taxon>Teredinibacter</taxon>
    </lineage>
</organism>